<accession>A8GYZ2</accession>
<protein>
    <recommendedName>
        <fullName evidence="1">Large ribosomal subunit protein uL18</fullName>
    </recommendedName>
    <alternativeName>
        <fullName evidence="2">50S ribosomal protein L18</fullName>
    </alternativeName>
</protein>
<reference key="1">
    <citation type="submission" date="2007-10" db="EMBL/GenBank/DDBJ databases">
        <title>Complete sequence of Shewanella pealeana ATCC 700345.</title>
        <authorList>
            <consortium name="US DOE Joint Genome Institute"/>
            <person name="Copeland A."/>
            <person name="Lucas S."/>
            <person name="Lapidus A."/>
            <person name="Barry K."/>
            <person name="Glavina del Rio T."/>
            <person name="Dalin E."/>
            <person name="Tice H."/>
            <person name="Pitluck S."/>
            <person name="Chertkov O."/>
            <person name="Brettin T."/>
            <person name="Bruce D."/>
            <person name="Detter J.C."/>
            <person name="Han C."/>
            <person name="Schmutz J."/>
            <person name="Larimer F."/>
            <person name="Land M."/>
            <person name="Hauser L."/>
            <person name="Kyrpides N."/>
            <person name="Kim E."/>
            <person name="Zhao J.-S.Z."/>
            <person name="Manno D."/>
            <person name="Hawari J."/>
            <person name="Richardson P."/>
        </authorList>
    </citation>
    <scope>NUCLEOTIDE SEQUENCE [LARGE SCALE GENOMIC DNA]</scope>
    <source>
        <strain>ATCC 700345 / ANG-SQ1</strain>
    </source>
</reference>
<organism>
    <name type="scientific">Shewanella pealeana (strain ATCC 700345 / ANG-SQ1)</name>
    <dbReference type="NCBI Taxonomy" id="398579"/>
    <lineage>
        <taxon>Bacteria</taxon>
        <taxon>Pseudomonadati</taxon>
        <taxon>Pseudomonadota</taxon>
        <taxon>Gammaproteobacteria</taxon>
        <taxon>Alteromonadales</taxon>
        <taxon>Shewanellaceae</taxon>
        <taxon>Shewanella</taxon>
    </lineage>
</organism>
<name>RL18_SHEPA</name>
<sequence length="116" mass="12670">MDKKTSRLRRALRARKKIQELGVNRLVVHRTPRHTYAQVISPENVVLAAASTAEKAVTEQLKYTGNVDAAKVVGKTVAERAIEKGVAVVAFDRSGFKYHGRVAALADAAREAGLKF</sequence>
<evidence type="ECO:0000255" key="1">
    <source>
        <dbReference type="HAMAP-Rule" id="MF_01337"/>
    </source>
</evidence>
<evidence type="ECO:0000305" key="2"/>
<feature type="chain" id="PRO_1000086687" description="Large ribosomal subunit protein uL18">
    <location>
        <begin position="1"/>
        <end position="116"/>
    </location>
</feature>
<proteinExistence type="inferred from homology"/>
<keyword id="KW-1185">Reference proteome</keyword>
<keyword id="KW-0687">Ribonucleoprotein</keyword>
<keyword id="KW-0689">Ribosomal protein</keyword>
<keyword id="KW-0694">RNA-binding</keyword>
<keyword id="KW-0699">rRNA-binding</keyword>
<dbReference type="EMBL" id="CP000851">
    <property type="protein sequence ID" value="ABV85529.1"/>
    <property type="molecule type" value="Genomic_DNA"/>
</dbReference>
<dbReference type="RefSeq" id="WP_012153470.1">
    <property type="nucleotide sequence ID" value="NC_009901.1"/>
</dbReference>
<dbReference type="SMR" id="A8GYZ2"/>
<dbReference type="STRING" id="398579.Spea_0200"/>
<dbReference type="KEGG" id="spl:Spea_0200"/>
<dbReference type="eggNOG" id="COG0256">
    <property type="taxonomic scope" value="Bacteria"/>
</dbReference>
<dbReference type="HOGENOM" id="CLU_098841_0_1_6"/>
<dbReference type="OrthoDB" id="9810939at2"/>
<dbReference type="Proteomes" id="UP000002608">
    <property type="component" value="Chromosome"/>
</dbReference>
<dbReference type="GO" id="GO:0022625">
    <property type="term" value="C:cytosolic large ribosomal subunit"/>
    <property type="evidence" value="ECO:0007669"/>
    <property type="project" value="TreeGrafter"/>
</dbReference>
<dbReference type="GO" id="GO:0008097">
    <property type="term" value="F:5S rRNA binding"/>
    <property type="evidence" value="ECO:0007669"/>
    <property type="project" value="TreeGrafter"/>
</dbReference>
<dbReference type="GO" id="GO:0003735">
    <property type="term" value="F:structural constituent of ribosome"/>
    <property type="evidence" value="ECO:0007669"/>
    <property type="project" value="InterPro"/>
</dbReference>
<dbReference type="GO" id="GO:0006412">
    <property type="term" value="P:translation"/>
    <property type="evidence" value="ECO:0007669"/>
    <property type="project" value="UniProtKB-UniRule"/>
</dbReference>
<dbReference type="CDD" id="cd00432">
    <property type="entry name" value="Ribosomal_L18_L5e"/>
    <property type="match status" value="1"/>
</dbReference>
<dbReference type="FunFam" id="3.30.420.100:FF:000001">
    <property type="entry name" value="50S ribosomal protein L18"/>
    <property type="match status" value="1"/>
</dbReference>
<dbReference type="Gene3D" id="3.30.420.100">
    <property type="match status" value="1"/>
</dbReference>
<dbReference type="HAMAP" id="MF_01337_B">
    <property type="entry name" value="Ribosomal_uL18_B"/>
    <property type="match status" value="1"/>
</dbReference>
<dbReference type="InterPro" id="IPR004389">
    <property type="entry name" value="Ribosomal_uL18_bac-type"/>
</dbReference>
<dbReference type="InterPro" id="IPR005484">
    <property type="entry name" value="Ribosomal_uL18_bac/euk"/>
</dbReference>
<dbReference type="NCBIfam" id="TIGR00060">
    <property type="entry name" value="L18_bact"/>
    <property type="match status" value="1"/>
</dbReference>
<dbReference type="PANTHER" id="PTHR12899">
    <property type="entry name" value="39S RIBOSOMAL PROTEIN L18, MITOCHONDRIAL"/>
    <property type="match status" value="1"/>
</dbReference>
<dbReference type="PANTHER" id="PTHR12899:SF3">
    <property type="entry name" value="LARGE RIBOSOMAL SUBUNIT PROTEIN UL18M"/>
    <property type="match status" value="1"/>
</dbReference>
<dbReference type="Pfam" id="PF00861">
    <property type="entry name" value="Ribosomal_L18p"/>
    <property type="match status" value="1"/>
</dbReference>
<dbReference type="SUPFAM" id="SSF53137">
    <property type="entry name" value="Translational machinery components"/>
    <property type="match status" value="1"/>
</dbReference>
<comment type="function">
    <text evidence="1">This is one of the proteins that bind and probably mediate the attachment of the 5S RNA into the large ribosomal subunit, where it forms part of the central protuberance.</text>
</comment>
<comment type="subunit">
    <text evidence="1">Part of the 50S ribosomal subunit; part of the 5S rRNA/L5/L18/L25 subcomplex. Contacts the 5S and 23S rRNAs.</text>
</comment>
<comment type="similarity">
    <text evidence="1">Belongs to the universal ribosomal protein uL18 family.</text>
</comment>
<gene>
    <name evidence="1" type="primary">rplR</name>
    <name type="ordered locus">Spea_0200</name>
</gene>